<keyword id="KW-0119">Carbohydrate metabolism</keyword>
<keyword id="KW-0456">Lyase</keyword>
<keyword id="KW-0554">One-carbon metabolism</keyword>
<evidence type="ECO:0000250" key="1"/>
<evidence type="ECO:0000305" key="2"/>
<sequence length="210" mass="22480">MELQLAIDLLNKEDAAELANKVKDYVDIVEIGTPIIYNEGLPAVKHMADNISNVKVLADMKIMDAADYEVSQAIKFGADVITILGVAEDASIKTAIEEAHKNNKQLLVDMIAVQDLEKRAKELDEMGADYIAVHTGYDLQAEGQSPLESLRTVKSVIKNSKVAVAGGIKPDTIKEIVAESPDLVIVGGGIANADDPVEAAKQCRAAIEGK</sequence>
<accession>Q2YS94</accession>
<proteinExistence type="inferred from homology"/>
<reference key="1">
    <citation type="journal article" date="2007" name="PLoS ONE">
        <title>Molecular correlates of host specialization in Staphylococcus aureus.</title>
        <authorList>
            <person name="Herron-Olson L."/>
            <person name="Fitzgerald J.R."/>
            <person name="Musser J.M."/>
            <person name="Kapur V."/>
        </authorList>
    </citation>
    <scope>NUCLEOTIDE SEQUENCE [LARGE SCALE GENOMIC DNA]</scope>
    <source>
        <strain>bovine RF122 / ET3-1</strain>
    </source>
</reference>
<organism>
    <name type="scientific">Staphylococcus aureus (strain bovine RF122 / ET3-1)</name>
    <dbReference type="NCBI Taxonomy" id="273036"/>
    <lineage>
        <taxon>Bacteria</taxon>
        <taxon>Bacillati</taxon>
        <taxon>Bacillota</taxon>
        <taxon>Bacilli</taxon>
        <taxon>Bacillales</taxon>
        <taxon>Staphylococcaceae</taxon>
        <taxon>Staphylococcus</taxon>
    </lineage>
</organism>
<comment type="function">
    <text evidence="1">Catalyzes the condensation of ribulose 5-phosphate with formaldehyde to form 3-hexulose 6-phosphate.</text>
</comment>
<comment type="catalytic activity">
    <reaction>
        <text>D-ribulose 5-phosphate + formaldehyde = D-arabino-hex-3-ulose 6-phosphate</text>
        <dbReference type="Rhea" id="RHEA:25201"/>
        <dbReference type="ChEBI" id="CHEBI:16842"/>
        <dbReference type="ChEBI" id="CHEBI:58121"/>
        <dbReference type="ChEBI" id="CHEBI:58542"/>
        <dbReference type="EC" id="4.1.2.43"/>
    </reaction>
</comment>
<comment type="pathway">
    <text>One-carbon metabolism; formaldehyde assimilation via RuMP pathway; D-fructose 6-phosphate from D-ribulose 5-phosphate and formaldehyde: step 1/2.</text>
</comment>
<comment type="similarity">
    <text evidence="2">Belongs to the HPS/KGPDC family. HPS subfamily.</text>
</comment>
<dbReference type="EC" id="4.1.2.43"/>
<dbReference type="EMBL" id="AJ938182">
    <property type="protein sequence ID" value="CAI80208.1"/>
    <property type="molecule type" value="Genomic_DNA"/>
</dbReference>
<dbReference type="RefSeq" id="WP_000422868.1">
    <property type="nucleotide sequence ID" value="NC_007622.1"/>
</dbReference>
<dbReference type="SMR" id="Q2YS94"/>
<dbReference type="KEGG" id="sab:SAB0520"/>
<dbReference type="HOGENOM" id="CLU_081825_1_0_9"/>
<dbReference type="UniPathway" id="UPA00294">
    <property type="reaction ID" value="UER00434"/>
</dbReference>
<dbReference type="GO" id="GO:0033982">
    <property type="term" value="F:3-dehydro-L-gulonate-6-phosphate decarboxylase activity"/>
    <property type="evidence" value="ECO:0007669"/>
    <property type="project" value="TreeGrafter"/>
</dbReference>
<dbReference type="GO" id="GO:0043801">
    <property type="term" value="F:hexulose-6-phosphate synthase activity"/>
    <property type="evidence" value="ECO:0007669"/>
    <property type="project" value="UniProtKB-EC"/>
</dbReference>
<dbReference type="GO" id="GO:0004590">
    <property type="term" value="F:orotidine-5'-phosphate decarboxylase activity"/>
    <property type="evidence" value="ECO:0007669"/>
    <property type="project" value="InterPro"/>
</dbReference>
<dbReference type="GO" id="GO:0006207">
    <property type="term" value="P:'de novo' pyrimidine nucleobase biosynthetic process"/>
    <property type="evidence" value="ECO:0007669"/>
    <property type="project" value="InterPro"/>
</dbReference>
<dbReference type="GO" id="GO:0019647">
    <property type="term" value="P:formaldehyde assimilation via ribulose monophosphate cycle"/>
    <property type="evidence" value="ECO:0007669"/>
    <property type="project" value="UniProtKB-UniPathway"/>
</dbReference>
<dbReference type="GO" id="GO:0019854">
    <property type="term" value="P:L-ascorbic acid catabolic process"/>
    <property type="evidence" value="ECO:0007669"/>
    <property type="project" value="TreeGrafter"/>
</dbReference>
<dbReference type="GO" id="GO:0006730">
    <property type="term" value="P:one-carbon metabolic process"/>
    <property type="evidence" value="ECO:0007669"/>
    <property type="project" value="UniProtKB-KW"/>
</dbReference>
<dbReference type="CDD" id="cd04726">
    <property type="entry name" value="KGPDC_HPS"/>
    <property type="match status" value="1"/>
</dbReference>
<dbReference type="FunFam" id="3.20.20.70:FF:000022">
    <property type="entry name" value="3-keto-L-gulonate-6-phosphate decarboxylase UlaD"/>
    <property type="match status" value="1"/>
</dbReference>
<dbReference type="Gene3D" id="3.20.20.70">
    <property type="entry name" value="Aldolase class I"/>
    <property type="match status" value="1"/>
</dbReference>
<dbReference type="InterPro" id="IPR017553">
    <property type="entry name" value="3-hexulose-6-phosphate_synth"/>
</dbReference>
<dbReference type="InterPro" id="IPR013785">
    <property type="entry name" value="Aldolase_TIM"/>
</dbReference>
<dbReference type="InterPro" id="IPR041710">
    <property type="entry name" value="HPS/KGPDC"/>
</dbReference>
<dbReference type="InterPro" id="IPR001754">
    <property type="entry name" value="OMPdeCOase_dom"/>
</dbReference>
<dbReference type="InterPro" id="IPR011060">
    <property type="entry name" value="RibuloseP-bd_barrel"/>
</dbReference>
<dbReference type="NCBIfam" id="TIGR03128">
    <property type="entry name" value="RuMP_HxlA"/>
    <property type="match status" value="1"/>
</dbReference>
<dbReference type="PANTHER" id="PTHR35039">
    <property type="entry name" value="3-KETO-L-GULONATE-6-PHOSPHATE DECARBOXYLASE SGBH-RELATED"/>
    <property type="match status" value="1"/>
</dbReference>
<dbReference type="PANTHER" id="PTHR35039:SF3">
    <property type="entry name" value="3-KETO-L-GULONATE-6-PHOSPHATE DECARBOXYLASE SGBH-RELATED"/>
    <property type="match status" value="1"/>
</dbReference>
<dbReference type="Pfam" id="PF00215">
    <property type="entry name" value="OMPdecase"/>
    <property type="match status" value="1"/>
</dbReference>
<dbReference type="SMART" id="SM00934">
    <property type="entry name" value="OMPdecase"/>
    <property type="match status" value="1"/>
</dbReference>
<dbReference type="SUPFAM" id="SSF51366">
    <property type="entry name" value="Ribulose-phoshate binding barrel"/>
    <property type="match status" value="1"/>
</dbReference>
<feature type="chain" id="PRO_0000269517" description="3-hexulose-6-phosphate synthase">
    <location>
        <begin position="1"/>
        <end position="210"/>
    </location>
</feature>
<name>HPS_STAAB</name>
<protein>
    <recommendedName>
        <fullName>3-hexulose-6-phosphate synthase</fullName>
        <shortName>HPS</shortName>
        <ecNumber>4.1.2.43</ecNumber>
    </recommendedName>
    <alternativeName>
        <fullName>D-arabino-3-hexulose-6-phosphate formaldehyde lyase</fullName>
    </alternativeName>
</protein>
<gene>
    <name type="ordered locus">SAB0520</name>
</gene>